<organism>
    <name type="scientific">Chlorobaculum tepidum (strain ATCC 49652 / DSM 12025 / NBRC 103806 / TLS)</name>
    <name type="common">Chlorobium tepidum</name>
    <dbReference type="NCBI Taxonomy" id="194439"/>
    <lineage>
        <taxon>Bacteria</taxon>
        <taxon>Pseudomonadati</taxon>
        <taxon>Chlorobiota</taxon>
        <taxon>Chlorobiia</taxon>
        <taxon>Chlorobiales</taxon>
        <taxon>Chlorobiaceae</taxon>
        <taxon>Chlorobaculum</taxon>
    </lineage>
</organism>
<feature type="chain" id="PRO_0000137190" description="Translation initiation factor IF-2">
    <location>
        <begin position="1"/>
        <end position="914"/>
    </location>
</feature>
<feature type="domain" description="tr-type G">
    <location>
        <begin position="411"/>
        <end position="581"/>
    </location>
</feature>
<feature type="region of interest" description="Disordered" evidence="3">
    <location>
        <begin position="246"/>
        <end position="271"/>
    </location>
</feature>
<feature type="region of interest" description="Disordered" evidence="3">
    <location>
        <begin position="293"/>
        <end position="313"/>
    </location>
</feature>
<feature type="region of interest" description="G1" evidence="1">
    <location>
        <begin position="420"/>
        <end position="427"/>
    </location>
</feature>
<feature type="region of interest" description="G2" evidence="1">
    <location>
        <begin position="445"/>
        <end position="449"/>
    </location>
</feature>
<feature type="region of interest" description="G3" evidence="1">
    <location>
        <begin position="467"/>
        <end position="470"/>
    </location>
</feature>
<feature type="region of interest" description="G4" evidence="1">
    <location>
        <begin position="521"/>
        <end position="524"/>
    </location>
</feature>
<feature type="region of interest" description="G5" evidence="1">
    <location>
        <begin position="557"/>
        <end position="559"/>
    </location>
</feature>
<feature type="compositionally biased region" description="Basic and acidic residues" evidence="3">
    <location>
        <begin position="249"/>
        <end position="266"/>
    </location>
</feature>
<feature type="binding site" evidence="2">
    <location>
        <begin position="420"/>
        <end position="427"/>
    </location>
    <ligand>
        <name>GTP</name>
        <dbReference type="ChEBI" id="CHEBI:37565"/>
    </ligand>
</feature>
<feature type="binding site" evidence="2">
    <location>
        <begin position="467"/>
        <end position="471"/>
    </location>
    <ligand>
        <name>GTP</name>
        <dbReference type="ChEBI" id="CHEBI:37565"/>
    </ligand>
</feature>
<feature type="binding site" evidence="2">
    <location>
        <begin position="521"/>
        <end position="524"/>
    </location>
    <ligand>
        <name>GTP</name>
        <dbReference type="ChEBI" id="CHEBI:37565"/>
    </ligand>
</feature>
<proteinExistence type="inferred from homology"/>
<comment type="function">
    <text evidence="2">One of the essential components for the initiation of protein synthesis. Protects formylmethionyl-tRNA from spontaneous hydrolysis and promotes its binding to the 30S ribosomal subunits. Also involved in the hydrolysis of GTP during the formation of the 70S ribosomal complex.</text>
</comment>
<comment type="subcellular location">
    <subcellularLocation>
        <location evidence="2">Cytoplasm</location>
    </subcellularLocation>
</comment>
<comment type="similarity">
    <text evidence="2">Belongs to the TRAFAC class translation factor GTPase superfamily. Classic translation factor GTPase family. IF-2 subfamily.</text>
</comment>
<keyword id="KW-0963">Cytoplasm</keyword>
<keyword id="KW-0342">GTP-binding</keyword>
<keyword id="KW-0396">Initiation factor</keyword>
<keyword id="KW-0547">Nucleotide-binding</keyword>
<keyword id="KW-0648">Protein biosynthesis</keyword>
<keyword id="KW-1185">Reference proteome</keyword>
<sequence length="914" mass="100647">MAIEEKQSRFRISDIAKELQVSPREVLQFVKQAGGKVASTSSMVGEDMRDMIFGNFSQEKKRVDEARKIRAEKQKRLTRLEEQSRKAYEKEQQLKESLSIAPLPAPVLHAPEVKIEIPPETATTPVAAEPPAILPVVSTPQPEPVADLPLVTEPVVAEPVAEAEPVVEAPVAETAGPEVMTPLVQTLPESMQAYEAPQKIGGLTVLGTIDVISEAERKKKSRKKSFRESAVELKGEFENVLSVDSEDGEAAKKKAAKPDGGEDVGVKKKKGKKKKKVEIDDKVISKNIKSTISGMDDSGLSGSRQKFRKQRRMEREREFEEAEAMREAEKTLIRVTEYASPHELAELMGLTAKEIIQKCFSMGKFVTINQRLDKETIELIGLEFGFEVEFISEIEATTTEELVDNAEDLQTRPPVVTIMGHVDHGKTSLLDYIRRSNVVAGESGGITQHIGAYEVSLDDGRHITFLDTPGHEAFTAMRARGAQVTDIVILVVAADDSVMPQTIEAINHAKAAGVPIVVAINKIDKPEANVEKIKAQLSEAGVLVEDWGGESQCQEISAKKGIGISELLEKVLAEAEIRELKGNYSRDILASGVIVESELDKGKGVVSTVLVQRGFLKVGDPFVAGNSMGKVRALMDERGKRIHEAGPSTPVRVLGFEDMPQSGDVLTVMASDRDARDLAQKRQIIKREHEFRRSTRVKLDSIARQIKEGLKKELSVIIKADTDGSIQALADGLMKIHNEEVKVQIIHQGVGQITETDVLLAAASDAIIIGFRVRPNVNAKRLAEKEDLDVRFYSVIYHVLEDVEKALEGMLSPELHEESLGSLEIRQVFRVPKVGNVGGAYVLEGKVSRDAKVRLLRDGVQIFEGQLDSLKRFKDDVKEVDAGYECGVSLKGYDDIKVGDVIEAYKIVEKKRKL</sequence>
<accession>Q8KFT1</accession>
<evidence type="ECO:0000250" key="1"/>
<evidence type="ECO:0000255" key="2">
    <source>
        <dbReference type="HAMAP-Rule" id="MF_00100"/>
    </source>
</evidence>
<evidence type="ECO:0000256" key="3">
    <source>
        <dbReference type="SAM" id="MobiDB-lite"/>
    </source>
</evidence>
<dbReference type="EMBL" id="AE006470">
    <property type="protein sequence ID" value="AAM71487.1"/>
    <property type="molecule type" value="Genomic_DNA"/>
</dbReference>
<dbReference type="RefSeq" id="NP_661145.1">
    <property type="nucleotide sequence ID" value="NC_002932.3"/>
</dbReference>
<dbReference type="RefSeq" id="WP_010931933.1">
    <property type="nucleotide sequence ID" value="NC_002932.3"/>
</dbReference>
<dbReference type="SMR" id="Q8KFT1"/>
<dbReference type="STRING" id="194439.CT0241"/>
<dbReference type="EnsemblBacteria" id="AAM71487">
    <property type="protein sequence ID" value="AAM71487"/>
    <property type="gene ID" value="CT0241"/>
</dbReference>
<dbReference type="KEGG" id="cte:CT0241"/>
<dbReference type="PATRIC" id="fig|194439.7.peg.233"/>
<dbReference type="eggNOG" id="COG0532">
    <property type="taxonomic scope" value="Bacteria"/>
</dbReference>
<dbReference type="eggNOG" id="COG3170">
    <property type="taxonomic scope" value="Bacteria"/>
</dbReference>
<dbReference type="HOGENOM" id="CLU_006301_0_1_10"/>
<dbReference type="OrthoDB" id="9811804at2"/>
<dbReference type="Proteomes" id="UP000001007">
    <property type="component" value="Chromosome"/>
</dbReference>
<dbReference type="GO" id="GO:0005737">
    <property type="term" value="C:cytoplasm"/>
    <property type="evidence" value="ECO:0007669"/>
    <property type="project" value="UniProtKB-SubCell"/>
</dbReference>
<dbReference type="GO" id="GO:0005525">
    <property type="term" value="F:GTP binding"/>
    <property type="evidence" value="ECO:0007669"/>
    <property type="project" value="UniProtKB-KW"/>
</dbReference>
<dbReference type="GO" id="GO:0003924">
    <property type="term" value="F:GTPase activity"/>
    <property type="evidence" value="ECO:0007669"/>
    <property type="project" value="UniProtKB-UniRule"/>
</dbReference>
<dbReference type="GO" id="GO:0003743">
    <property type="term" value="F:translation initiation factor activity"/>
    <property type="evidence" value="ECO:0007669"/>
    <property type="project" value="UniProtKB-UniRule"/>
</dbReference>
<dbReference type="CDD" id="cd01887">
    <property type="entry name" value="IF2_eIF5B"/>
    <property type="match status" value="1"/>
</dbReference>
<dbReference type="CDD" id="cd03702">
    <property type="entry name" value="IF2_mtIF2_II"/>
    <property type="match status" value="1"/>
</dbReference>
<dbReference type="CDD" id="cd03692">
    <property type="entry name" value="mtIF2_IVc"/>
    <property type="match status" value="1"/>
</dbReference>
<dbReference type="FunFam" id="2.40.30.10:FF:000007">
    <property type="entry name" value="Translation initiation factor IF-2"/>
    <property type="match status" value="1"/>
</dbReference>
<dbReference type="FunFam" id="2.40.30.10:FF:000008">
    <property type="entry name" value="Translation initiation factor IF-2"/>
    <property type="match status" value="1"/>
</dbReference>
<dbReference type="FunFam" id="3.40.50.10050:FF:000001">
    <property type="entry name" value="Translation initiation factor IF-2"/>
    <property type="match status" value="1"/>
</dbReference>
<dbReference type="FunFam" id="3.40.50.300:FF:000019">
    <property type="entry name" value="Translation initiation factor IF-2"/>
    <property type="match status" value="1"/>
</dbReference>
<dbReference type="Gene3D" id="1.10.10.2480">
    <property type="match status" value="1"/>
</dbReference>
<dbReference type="Gene3D" id="3.40.50.300">
    <property type="entry name" value="P-loop containing nucleotide triphosphate hydrolases"/>
    <property type="match status" value="1"/>
</dbReference>
<dbReference type="Gene3D" id="2.40.30.10">
    <property type="entry name" value="Translation factors"/>
    <property type="match status" value="2"/>
</dbReference>
<dbReference type="Gene3D" id="3.40.50.10050">
    <property type="entry name" value="Translation initiation factor IF- 2, domain 3"/>
    <property type="match status" value="1"/>
</dbReference>
<dbReference type="HAMAP" id="MF_00100_B">
    <property type="entry name" value="IF_2_B"/>
    <property type="match status" value="1"/>
</dbReference>
<dbReference type="InterPro" id="IPR053905">
    <property type="entry name" value="EF-G-like_DII"/>
</dbReference>
<dbReference type="InterPro" id="IPR004161">
    <property type="entry name" value="EFTu-like_2"/>
</dbReference>
<dbReference type="InterPro" id="IPR044145">
    <property type="entry name" value="IF2_II"/>
</dbReference>
<dbReference type="InterPro" id="IPR006847">
    <property type="entry name" value="IF2_N"/>
</dbReference>
<dbReference type="InterPro" id="IPR027417">
    <property type="entry name" value="P-loop_NTPase"/>
</dbReference>
<dbReference type="InterPro" id="IPR005225">
    <property type="entry name" value="Small_GTP-bd"/>
</dbReference>
<dbReference type="InterPro" id="IPR000795">
    <property type="entry name" value="T_Tr_GTP-bd_dom"/>
</dbReference>
<dbReference type="InterPro" id="IPR000178">
    <property type="entry name" value="TF_IF2_bacterial-like"/>
</dbReference>
<dbReference type="InterPro" id="IPR015760">
    <property type="entry name" value="TIF_IF2"/>
</dbReference>
<dbReference type="InterPro" id="IPR023115">
    <property type="entry name" value="TIF_IF2_dom3"/>
</dbReference>
<dbReference type="InterPro" id="IPR036925">
    <property type="entry name" value="TIF_IF2_dom3_sf"/>
</dbReference>
<dbReference type="InterPro" id="IPR009000">
    <property type="entry name" value="Transl_B-barrel_sf"/>
</dbReference>
<dbReference type="NCBIfam" id="TIGR00487">
    <property type="entry name" value="IF-2"/>
    <property type="match status" value="1"/>
</dbReference>
<dbReference type="NCBIfam" id="TIGR00231">
    <property type="entry name" value="small_GTP"/>
    <property type="match status" value="1"/>
</dbReference>
<dbReference type="PANTHER" id="PTHR43381:SF5">
    <property type="entry name" value="TR-TYPE G DOMAIN-CONTAINING PROTEIN"/>
    <property type="match status" value="1"/>
</dbReference>
<dbReference type="PANTHER" id="PTHR43381">
    <property type="entry name" value="TRANSLATION INITIATION FACTOR IF-2-RELATED"/>
    <property type="match status" value="1"/>
</dbReference>
<dbReference type="Pfam" id="PF22042">
    <property type="entry name" value="EF-G_D2"/>
    <property type="match status" value="1"/>
</dbReference>
<dbReference type="Pfam" id="PF00009">
    <property type="entry name" value="GTP_EFTU"/>
    <property type="match status" value="1"/>
</dbReference>
<dbReference type="Pfam" id="PF03144">
    <property type="entry name" value="GTP_EFTU_D2"/>
    <property type="match status" value="1"/>
</dbReference>
<dbReference type="Pfam" id="PF11987">
    <property type="entry name" value="IF-2"/>
    <property type="match status" value="1"/>
</dbReference>
<dbReference type="Pfam" id="PF04760">
    <property type="entry name" value="IF2_N"/>
    <property type="match status" value="1"/>
</dbReference>
<dbReference type="SUPFAM" id="SSF52156">
    <property type="entry name" value="Initiation factor IF2/eIF5b, domain 3"/>
    <property type="match status" value="1"/>
</dbReference>
<dbReference type="SUPFAM" id="SSF52540">
    <property type="entry name" value="P-loop containing nucleoside triphosphate hydrolases"/>
    <property type="match status" value="1"/>
</dbReference>
<dbReference type="SUPFAM" id="SSF50447">
    <property type="entry name" value="Translation proteins"/>
    <property type="match status" value="2"/>
</dbReference>
<dbReference type="PROSITE" id="PS51722">
    <property type="entry name" value="G_TR_2"/>
    <property type="match status" value="1"/>
</dbReference>
<dbReference type="PROSITE" id="PS01176">
    <property type="entry name" value="IF2"/>
    <property type="match status" value="1"/>
</dbReference>
<gene>
    <name evidence="2" type="primary">infB</name>
    <name type="ordered locus">CT0241</name>
</gene>
<protein>
    <recommendedName>
        <fullName evidence="2">Translation initiation factor IF-2</fullName>
    </recommendedName>
</protein>
<reference key="1">
    <citation type="journal article" date="2002" name="Proc. Natl. Acad. Sci. U.S.A.">
        <title>The complete genome sequence of Chlorobium tepidum TLS, a photosynthetic, anaerobic, green-sulfur bacterium.</title>
        <authorList>
            <person name="Eisen J.A."/>
            <person name="Nelson K.E."/>
            <person name="Paulsen I.T."/>
            <person name="Heidelberg J.F."/>
            <person name="Wu M."/>
            <person name="Dodson R.J."/>
            <person name="DeBoy R.T."/>
            <person name="Gwinn M.L."/>
            <person name="Nelson W.C."/>
            <person name="Haft D.H."/>
            <person name="Hickey E.K."/>
            <person name="Peterson J.D."/>
            <person name="Durkin A.S."/>
            <person name="Kolonay J.F."/>
            <person name="Yang F."/>
            <person name="Holt I.E."/>
            <person name="Umayam L.A."/>
            <person name="Mason T.M."/>
            <person name="Brenner M."/>
            <person name="Shea T.P."/>
            <person name="Parksey D.S."/>
            <person name="Nierman W.C."/>
            <person name="Feldblyum T.V."/>
            <person name="Hansen C.L."/>
            <person name="Craven M.B."/>
            <person name="Radune D."/>
            <person name="Vamathevan J.J."/>
            <person name="Khouri H.M."/>
            <person name="White O."/>
            <person name="Gruber T.M."/>
            <person name="Ketchum K.A."/>
            <person name="Venter J.C."/>
            <person name="Tettelin H."/>
            <person name="Bryant D.A."/>
            <person name="Fraser C.M."/>
        </authorList>
    </citation>
    <scope>NUCLEOTIDE SEQUENCE [LARGE SCALE GENOMIC DNA]</scope>
    <source>
        <strain>ATCC 49652 / DSM 12025 / NBRC 103806 / TLS</strain>
    </source>
</reference>
<name>IF2_CHLTE</name>